<reference key="1">
    <citation type="journal article" date="2005" name="PLoS Biol.">
        <title>Major structural differences and novel potential virulence mechanisms from the genomes of multiple Campylobacter species.</title>
        <authorList>
            <person name="Fouts D.E."/>
            <person name="Mongodin E.F."/>
            <person name="Mandrell R.E."/>
            <person name="Miller W.G."/>
            <person name="Rasko D.A."/>
            <person name="Ravel J."/>
            <person name="Brinkac L.M."/>
            <person name="DeBoy R.T."/>
            <person name="Parker C.T."/>
            <person name="Daugherty S.C."/>
            <person name="Dodson R.J."/>
            <person name="Durkin A.S."/>
            <person name="Madupu R."/>
            <person name="Sullivan S.A."/>
            <person name="Shetty J.U."/>
            <person name="Ayodeji M.A."/>
            <person name="Shvartsbeyn A."/>
            <person name="Schatz M.C."/>
            <person name="Badger J.H."/>
            <person name="Fraser C.M."/>
            <person name="Nelson K.E."/>
        </authorList>
    </citation>
    <scope>NUCLEOTIDE SEQUENCE [LARGE SCALE GENOMIC DNA]</scope>
    <source>
        <strain>RM1221</strain>
    </source>
</reference>
<name>OTC_CAMJR</name>
<accession>Q5HUG8</accession>
<organism>
    <name type="scientific">Campylobacter jejuni (strain RM1221)</name>
    <dbReference type="NCBI Taxonomy" id="195099"/>
    <lineage>
        <taxon>Bacteria</taxon>
        <taxon>Pseudomonadati</taxon>
        <taxon>Campylobacterota</taxon>
        <taxon>Epsilonproteobacteria</taxon>
        <taxon>Campylobacterales</taxon>
        <taxon>Campylobacteraceae</taxon>
        <taxon>Campylobacter</taxon>
    </lineage>
</organism>
<evidence type="ECO:0000250" key="1"/>
<evidence type="ECO:0000255" key="2">
    <source>
        <dbReference type="HAMAP-Rule" id="MF_01109"/>
    </source>
</evidence>
<keyword id="KW-0028">Amino-acid biosynthesis</keyword>
<keyword id="KW-0055">Arginine biosynthesis</keyword>
<keyword id="KW-0963">Cytoplasm</keyword>
<keyword id="KW-0808">Transferase</keyword>
<protein>
    <recommendedName>
        <fullName evidence="2">Ornithine carbamoyltransferase</fullName>
        <shortName evidence="2">OTCase</shortName>
        <ecNumber evidence="2">2.1.3.3</ecNumber>
    </recommendedName>
</protein>
<sequence>MKHFLTLRDFSKEEILSLVNHASELKKEPKKLLQDKTLAMIFEKNSTRTRMAFELAITELGGKALFLSSNDLQLSRGEPVKDTARVIGAMVDFVMMRVNKHETLLEFARYSKAPVINALSELYHPTQVLGDLLTIKEWNKMQNGIAKVAFIGDSNNMCNSWLIAAAILGFEFSIAIPKNYKISPEIWEFAMKQALISGAKISLSHDRFEALKDKDVVITDTWVSMGEENEKERKIKEFEGFMIDEKAMSVANKDAILLHCLPAYRGYEVSEEIFEKHADVIFEEARNRLYVVKALLCFLDNQRGRE</sequence>
<gene>
    <name evidence="2" type="primary">argF</name>
    <name type="ordered locus">CJE1074</name>
</gene>
<feature type="chain" id="PRO_1000065085" description="Ornithine carbamoyltransferase">
    <location>
        <begin position="1"/>
        <end position="306"/>
    </location>
</feature>
<feature type="binding site" evidence="2">
    <location>
        <begin position="46"/>
        <end position="49"/>
    </location>
    <ligand>
        <name>carbamoyl phosphate</name>
        <dbReference type="ChEBI" id="CHEBI:58228"/>
    </ligand>
</feature>
<feature type="binding site" evidence="2">
    <location>
        <position position="73"/>
    </location>
    <ligand>
        <name>carbamoyl phosphate</name>
        <dbReference type="ChEBI" id="CHEBI:58228"/>
    </ligand>
</feature>
<feature type="binding site" evidence="2">
    <location>
        <position position="97"/>
    </location>
    <ligand>
        <name>carbamoyl phosphate</name>
        <dbReference type="ChEBI" id="CHEBI:58228"/>
    </ligand>
</feature>
<feature type="binding site" evidence="2">
    <location>
        <begin position="124"/>
        <end position="127"/>
    </location>
    <ligand>
        <name>carbamoyl phosphate</name>
        <dbReference type="ChEBI" id="CHEBI:58228"/>
    </ligand>
</feature>
<feature type="binding site" evidence="2">
    <location>
        <position position="156"/>
    </location>
    <ligand>
        <name>L-ornithine</name>
        <dbReference type="ChEBI" id="CHEBI:46911"/>
    </ligand>
</feature>
<feature type="binding site" evidence="2">
    <location>
        <position position="220"/>
    </location>
    <ligand>
        <name>L-ornithine</name>
        <dbReference type="ChEBI" id="CHEBI:46911"/>
    </ligand>
</feature>
<feature type="binding site" evidence="2">
    <location>
        <begin position="224"/>
        <end position="225"/>
    </location>
    <ligand>
        <name>L-ornithine</name>
        <dbReference type="ChEBI" id="CHEBI:46911"/>
    </ligand>
</feature>
<feature type="binding site" evidence="2">
    <location>
        <begin position="260"/>
        <end position="261"/>
    </location>
    <ligand>
        <name>carbamoyl phosphate</name>
        <dbReference type="ChEBI" id="CHEBI:58228"/>
    </ligand>
</feature>
<feature type="binding site" evidence="2">
    <location>
        <position position="288"/>
    </location>
    <ligand>
        <name>carbamoyl phosphate</name>
        <dbReference type="ChEBI" id="CHEBI:58228"/>
    </ligand>
</feature>
<dbReference type="EC" id="2.1.3.3" evidence="2"/>
<dbReference type="EMBL" id="CP000025">
    <property type="protein sequence ID" value="AAW35402.1"/>
    <property type="molecule type" value="Genomic_DNA"/>
</dbReference>
<dbReference type="RefSeq" id="WP_002924676.1">
    <property type="nucleotide sequence ID" value="NC_003912.7"/>
</dbReference>
<dbReference type="SMR" id="Q5HUG8"/>
<dbReference type="KEGG" id="cjr:CJE1074"/>
<dbReference type="HOGENOM" id="CLU_043846_3_2_7"/>
<dbReference type="UniPathway" id="UPA00068">
    <property type="reaction ID" value="UER00112"/>
</dbReference>
<dbReference type="GO" id="GO:0005737">
    <property type="term" value="C:cytoplasm"/>
    <property type="evidence" value="ECO:0007669"/>
    <property type="project" value="UniProtKB-SubCell"/>
</dbReference>
<dbReference type="GO" id="GO:0016597">
    <property type="term" value="F:amino acid binding"/>
    <property type="evidence" value="ECO:0007669"/>
    <property type="project" value="InterPro"/>
</dbReference>
<dbReference type="GO" id="GO:0004585">
    <property type="term" value="F:ornithine carbamoyltransferase activity"/>
    <property type="evidence" value="ECO:0007669"/>
    <property type="project" value="UniProtKB-UniRule"/>
</dbReference>
<dbReference type="GO" id="GO:0042450">
    <property type="term" value="P:arginine biosynthetic process via ornithine"/>
    <property type="evidence" value="ECO:0007669"/>
    <property type="project" value="TreeGrafter"/>
</dbReference>
<dbReference type="GO" id="GO:0019240">
    <property type="term" value="P:citrulline biosynthetic process"/>
    <property type="evidence" value="ECO:0007669"/>
    <property type="project" value="TreeGrafter"/>
</dbReference>
<dbReference type="GO" id="GO:0006526">
    <property type="term" value="P:L-arginine biosynthetic process"/>
    <property type="evidence" value="ECO:0007669"/>
    <property type="project" value="UniProtKB-UniRule"/>
</dbReference>
<dbReference type="FunFam" id="3.40.50.1370:FF:000008">
    <property type="entry name" value="Ornithine carbamoyltransferase"/>
    <property type="match status" value="1"/>
</dbReference>
<dbReference type="Gene3D" id="3.40.50.1370">
    <property type="entry name" value="Aspartate/ornithine carbamoyltransferase"/>
    <property type="match status" value="2"/>
</dbReference>
<dbReference type="HAMAP" id="MF_01109">
    <property type="entry name" value="OTCase"/>
    <property type="match status" value="1"/>
</dbReference>
<dbReference type="InterPro" id="IPR006132">
    <property type="entry name" value="Asp/Orn_carbamoyltranf_P-bd"/>
</dbReference>
<dbReference type="InterPro" id="IPR006130">
    <property type="entry name" value="Asp/Orn_carbamoylTrfase"/>
</dbReference>
<dbReference type="InterPro" id="IPR036901">
    <property type="entry name" value="Asp/Orn_carbamoylTrfase_sf"/>
</dbReference>
<dbReference type="InterPro" id="IPR006131">
    <property type="entry name" value="Asp_carbamoyltransf_Asp/Orn-bd"/>
</dbReference>
<dbReference type="InterPro" id="IPR002292">
    <property type="entry name" value="Orn/put_carbamltrans"/>
</dbReference>
<dbReference type="InterPro" id="IPR024904">
    <property type="entry name" value="OTCase_ArgI"/>
</dbReference>
<dbReference type="NCBIfam" id="TIGR00658">
    <property type="entry name" value="orni_carb_tr"/>
    <property type="match status" value="1"/>
</dbReference>
<dbReference type="NCBIfam" id="NF001986">
    <property type="entry name" value="PRK00779.1"/>
    <property type="match status" value="1"/>
</dbReference>
<dbReference type="PANTHER" id="PTHR45753">
    <property type="entry name" value="ORNITHINE CARBAMOYLTRANSFERASE, MITOCHONDRIAL"/>
    <property type="match status" value="1"/>
</dbReference>
<dbReference type="PANTHER" id="PTHR45753:SF3">
    <property type="entry name" value="ORNITHINE TRANSCARBAMYLASE, MITOCHONDRIAL"/>
    <property type="match status" value="1"/>
</dbReference>
<dbReference type="Pfam" id="PF00185">
    <property type="entry name" value="OTCace"/>
    <property type="match status" value="1"/>
</dbReference>
<dbReference type="Pfam" id="PF02729">
    <property type="entry name" value="OTCace_N"/>
    <property type="match status" value="1"/>
</dbReference>
<dbReference type="PRINTS" id="PR00100">
    <property type="entry name" value="AOTCASE"/>
</dbReference>
<dbReference type="PRINTS" id="PR00102">
    <property type="entry name" value="OTCASE"/>
</dbReference>
<dbReference type="SUPFAM" id="SSF53671">
    <property type="entry name" value="Aspartate/ornithine carbamoyltransferase"/>
    <property type="match status" value="1"/>
</dbReference>
<dbReference type="PROSITE" id="PS00097">
    <property type="entry name" value="CARBAMOYLTRANSFERASE"/>
    <property type="match status" value="1"/>
</dbReference>
<comment type="function">
    <text evidence="1">Reversibly catalyzes the transfer of the carbamoyl group from carbamoyl phosphate (CP) to the N(epsilon) atom of ornithine (ORN) to produce L-citrulline.</text>
</comment>
<comment type="catalytic activity">
    <reaction evidence="2">
        <text>carbamoyl phosphate + L-ornithine = L-citrulline + phosphate + H(+)</text>
        <dbReference type="Rhea" id="RHEA:19513"/>
        <dbReference type="ChEBI" id="CHEBI:15378"/>
        <dbReference type="ChEBI" id="CHEBI:43474"/>
        <dbReference type="ChEBI" id="CHEBI:46911"/>
        <dbReference type="ChEBI" id="CHEBI:57743"/>
        <dbReference type="ChEBI" id="CHEBI:58228"/>
        <dbReference type="EC" id="2.1.3.3"/>
    </reaction>
</comment>
<comment type="pathway">
    <text evidence="2">Amino-acid biosynthesis; L-arginine biosynthesis; L-arginine from L-ornithine and carbamoyl phosphate: step 1/3.</text>
</comment>
<comment type="subcellular location">
    <subcellularLocation>
        <location evidence="2">Cytoplasm</location>
    </subcellularLocation>
</comment>
<comment type="similarity">
    <text evidence="2">Belongs to the aspartate/ornithine carbamoyltransferase superfamily. OTCase family.</text>
</comment>
<proteinExistence type="inferred from homology"/>